<reference key="1">
    <citation type="journal article" date="2010" name="Science">
        <title>The genome of the Western clawed frog Xenopus tropicalis.</title>
        <authorList>
            <person name="Hellsten U."/>
            <person name="Harland R.M."/>
            <person name="Gilchrist M.J."/>
            <person name="Hendrix D."/>
            <person name="Jurka J."/>
            <person name="Kapitonov V."/>
            <person name="Ovcharenko I."/>
            <person name="Putnam N.H."/>
            <person name="Shu S."/>
            <person name="Taher L."/>
            <person name="Blitz I.L."/>
            <person name="Blumberg B."/>
            <person name="Dichmann D.S."/>
            <person name="Dubchak I."/>
            <person name="Amaya E."/>
            <person name="Detter J.C."/>
            <person name="Fletcher R."/>
            <person name="Gerhard D.S."/>
            <person name="Goodstein D."/>
            <person name="Graves T."/>
            <person name="Grigoriev I.V."/>
            <person name="Grimwood J."/>
            <person name="Kawashima T."/>
            <person name="Lindquist E."/>
            <person name="Lucas S.M."/>
            <person name="Mead P.E."/>
            <person name="Mitros T."/>
            <person name="Ogino H."/>
            <person name="Ohta Y."/>
            <person name="Poliakov A.V."/>
            <person name="Pollet N."/>
            <person name="Robert J."/>
            <person name="Salamov A."/>
            <person name="Sater A.K."/>
            <person name="Schmutz J."/>
            <person name="Terry A."/>
            <person name="Vize P.D."/>
            <person name="Warren W.C."/>
            <person name="Wells D."/>
            <person name="Wills A."/>
            <person name="Wilson R.K."/>
            <person name="Zimmerman L.B."/>
            <person name="Zorn A.M."/>
            <person name="Grainger R."/>
            <person name="Grammer T."/>
            <person name="Khokha M.K."/>
            <person name="Richardson P.M."/>
            <person name="Rokhsar D.S."/>
        </authorList>
    </citation>
    <scope>NUCLEOTIDE SEQUENCE [LARGE SCALE GENOMIC DNA]</scope>
</reference>
<reference key="2">
    <citation type="journal article" date="2015" name="Nature">
        <title>Cell-fate determination by ubiquitin-dependent regulation of translation.</title>
        <authorList>
            <person name="Werner A."/>
            <person name="Iwasaki S."/>
            <person name="McGourty C.A."/>
            <person name="Medina-Ruiz S."/>
            <person name="Teerikorpi N."/>
            <person name="Fedrigo I."/>
            <person name="Ingolia N.T."/>
            <person name="Rape M."/>
        </authorList>
    </citation>
    <scope>FUNCTION</scope>
</reference>
<comment type="function">
    <text evidence="1 4">Substrate-specific adapter of a BCR (BTB-CUL3-RBX1) E3 ubiquitin ligase complex that acts as a regulator of neural crest specification (PubMed:26399832). The BCR(KBTBD8) complex acts by mediating monoubiquitination of target proteins (By similarity).</text>
</comment>
<comment type="subunit">
    <text evidence="1">Component of the BCR(KBTBD8) E3 ubiquitin ligase complex.</text>
</comment>
<comment type="subcellular location">
    <subcellularLocation>
        <location evidence="1">Cytoplasm</location>
        <location evidence="1">Cytoskeleton</location>
        <location evidence="1">Spindle</location>
    </subcellularLocation>
    <subcellularLocation>
        <location evidence="1">Golgi apparatus</location>
    </subcellularLocation>
    <text evidence="1">Translocates to the spindle apparatus during mitosis.</text>
</comment>
<comment type="similarity">
    <text evidence="5">Belongs to the KBTBD8 family.</text>
</comment>
<sequence>MAQTPSSTASTEVAKYVQTQNGIPPSNPVSSAMDPYHACSILQQLKAMYDEGKLTDIVVQVDHGKHFSCHRNVLAAISPYFRSMFTSGLTESTQKEVRLVGIEAESMQLVLNYAYTSRVQLTEANVQALFTAASIFQIPSLQDQCAQYMISRLEPQNCIGVFSFADHYGHQELKEKAQDYIRKKFLYVTKEQEFLHLRKDQLISILNSDDLDVEKEEHVYDSIISWYEHEQETREMHLPEIFAKCIRMPLMEETFVEQIPPIFAQAMPINRVQKGKISANCCTRRLGMTASEMIICFEAANKHSGKKQTVPCLDTLTGKVYKLCKPPGDLREVGILVTPDNELYIAGGYRPSNNDVCIDHKAESDFWLYDHSSNRWLPKAPLLRARIGCKLVHCCGKLYAIGGRVYEGDGRNPLKSVECYDTRDNCWTAVSLMPVAMEFHSAVEYKDKIYILQGEVFLCYDPPRDYWCYLTPMTAPRVQGMAAVYKDSIYYVAGIRGNHRVLTVEAYDVEQNRWTRKKDLPCEQSSNPYIKLVVFKSKLHLFVRATQVSVEEFVFRTSRKNSLYQYDEIADSWKKVYETPERLWDLGRHFECAVAKLYPQCLQKVL</sequence>
<dbReference type="EMBL" id="KV460360">
    <property type="protein sequence ID" value="OCA19947.1"/>
    <property type="molecule type" value="Genomic_DNA"/>
</dbReference>
<dbReference type="EMBL" id="AAMC01080009">
    <property type="status" value="NOT_ANNOTATED_CDS"/>
    <property type="molecule type" value="Genomic_DNA"/>
</dbReference>
<dbReference type="EMBL" id="AAMC01080010">
    <property type="status" value="NOT_ANNOTATED_CDS"/>
    <property type="molecule type" value="Genomic_DNA"/>
</dbReference>
<dbReference type="EMBL" id="AAMC01080011">
    <property type="status" value="NOT_ANNOTATED_CDS"/>
    <property type="molecule type" value="Genomic_DNA"/>
</dbReference>
<dbReference type="EMBL" id="AAMC01080012">
    <property type="status" value="NOT_ANNOTATED_CDS"/>
    <property type="molecule type" value="Genomic_DNA"/>
</dbReference>
<dbReference type="SMR" id="A0A1B8YAB1"/>
<dbReference type="FunCoup" id="A0A1B8YAB1">
    <property type="interactions" value="229"/>
</dbReference>
<dbReference type="STRING" id="8364.ENSXETP00000017686"/>
<dbReference type="PaxDb" id="8364-ENSXETP00000005362"/>
<dbReference type="eggNOG" id="KOG4441">
    <property type="taxonomic scope" value="Eukaryota"/>
</dbReference>
<dbReference type="InParanoid" id="A0A1B8YAB1"/>
<dbReference type="TreeFam" id="TF332672"/>
<dbReference type="Proteomes" id="UP000008143">
    <property type="component" value="Unplaced"/>
</dbReference>
<dbReference type="GO" id="GO:0031463">
    <property type="term" value="C:Cul3-RING ubiquitin ligase complex"/>
    <property type="evidence" value="ECO:0000250"/>
    <property type="project" value="UniProtKB"/>
</dbReference>
<dbReference type="GO" id="GO:0005794">
    <property type="term" value="C:Golgi apparatus"/>
    <property type="evidence" value="ECO:0007669"/>
    <property type="project" value="UniProtKB-SubCell"/>
</dbReference>
<dbReference type="GO" id="GO:0005819">
    <property type="term" value="C:spindle"/>
    <property type="evidence" value="ECO:0007669"/>
    <property type="project" value="UniProtKB-SubCell"/>
</dbReference>
<dbReference type="GO" id="GO:0014032">
    <property type="term" value="P:neural crest cell development"/>
    <property type="evidence" value="ECO:0000315"/>
    <property type="project" value="UniProtKB"/>
</dbReference>
<dbReference type="GO" id="GO:0014029">
    <property type="term" value="P:neural crest formation"/>
    <property type="evidence" value="ECO:0000315"/>
    <property type="project" value="UniProtKB"/>
</dbReference>
<dbReference type="GO" id="GO:0006513">
    <property type="term" value="P:protein monoubiquitination"/>
    <property type="evidence" value="ECO:0000250"/>
    <property type="project" value="UniProtKB"/>
</dbReference>
<dbReference type="GO" id="GO:0006417">
    <property type="term" value="P:regulation of translation"/>
    <property type="evidence" value="ECO:0007669"/>
    <property type="project" value="UniProtKB-KW"/>
</dbReference>
<dbReference type="CDD" id="cd18483">
    <property type="entry name" value="BACK_KBTBD8"/>
    <property type="match status" value="1"/>
</dbReference>
<dbReference type="CDD" id="cd18274">
    <property type="entry name" value="BTB_POZ_KBTBD8"/>
    <property type="match status" value="1"/>
</dbReference>
<dbReference type="FunFam" id="3.30.710.10:FF:000006">
    <property type="entry name" value="Kelch repeat and BTB domain-containing 6"/>
    <property type="match status" value="1"/>
</dbReference>
<dbReference type="FunFam" id="2.120.10.80:FF:000020">
    <property type="entry name" value="Kelch repeat and BTB domain-containing protein 8"/>
    <property type="match status" value="1"/>
</dbReference>
<dbReference type="FunFam" id="1.25.40.420:FF:000014">
    <property type="entry name" value="kelch repeat and BTB domain-containing protein 8"/>
    <property type="match status" value="1"/>
</dbReference>
<dbReference type="Gene3D" id="1.25.40.420">
    <property type="match status" value="1"/>
</dbReference>
<dbReference type="Gene3D" id="2.120.10.80">
    <property type="entry name" value="Kelch-type beta propeller"/>
    <property type="match status" value="1"/>
</dbReference>
<dbReference type="Gene3D" id="3.30.710.10">
    <property type="entry name" value="Potassium Channel Kv1.1, Chain A"/>
    <property type="match status" value="1"/>
</dbReference>
<dbReference type="InterPro" id="IPR011705">
    <property type="entry name" value="BACK"/>
</dbReference>
<dbReference type="InterPro" id="IPR017096">
    <property type="entry name" value="BTB-kelch_protein"/>
</dbReference>
<dbReference type="InterPro" id="IPR000210">
    <property type="entry name" value="BTB/POZ_dom"/>
</dbReference>
<dbReference type="InterPro" id="IPR028764">
    <property type="entry name" value="BTB/POZ_KBTBD8"/>
</dbReference>
<dbReference type="InterPro" id="IPR015915">
    <property type="entry name" value="Kelch-typ_b-propeller"/>
</dbReference>
<dbReference type="InterPro" id="IPR006652">
    <property type="entry name" value="Kelch_1"/>
</dbReference>
<dbReference type="InterPro" id="IPR011333">
    <property type="entry name" value="SKP1/BTB/POZ_sf"/>
</dbReference>
<dbReference type="PANTHER" id="PTHR24412">
    <property type="entry name" value="KELCH PROTEIN"/>
    <property type="match status" value="1"/>
</dbReference>
<dbReference type="PANTHER" id="PTHR24412:SF433">
    <property type="entry name" value="KELCH REPEAT AND BTB DOMAIN-CONTAINING PROTEIN 8"/>
    <property type="match status" value="1"/>
</dbReference>
<dbReference type="Pfam" id="PF07707">
    <property type="entry name" value="BACK"/>
    <property type="match status" value="1"/>
</dbReference>
<dbReference type="Pfam" id="PF00651">
    <property type="entry name" value="BTB"/>
    <property type="match status" value="1"/>
</dbReference>
<dbReference type="Pfam" id="PF24681">
    <property type="entry name" value="Kelch_KLHDC2_KLHL20_DRC7"/>
    <property type="match status" value="1"/>
</dbReference>
<dbReference type="PIRSF" id="PIRSF037037">
    <property type="entry name" value="Kelch-like_protein_gigaxonin"/>
    <property type="match status" value="1"/>
</dbReference>
<dbReference type="SMART" id="SM00875">
    <property type="entry name" value="BACK"/>
    <property type="match status" value="1"/>
</dbReference>
<dbReference type="SMART" id="SM00225">
    <property type="entry name" value="BTB"/>
    <property type="match status" value="1"/>
</dbReference>
<dbReference type="SMART" id="SM00612">
    <property type="entry name" value="Kelch"/>
    <property type="match status" value="4"/>
</dbReference>
<dbReference type="SUPFAM" id="SSF117281">
    <property type="entry name" value="Kelch motif"/>
    <property type="match status" value="1"/>
</dbReference>
<dbReference type="SUPFAM" id="SSF54695">
    <property type="entry name" value="POZ domain"/>
    <property type="match status" value="1"/>
</dbReference>
<dbReference type="PROSITE" id="PS50097">
    <property type="entry name" value="BTB"/>
    <property type="match status" value="1"/>
</dbReference>
<protein>
    <recommendedName>
        <fullName>Kelch repeat and BTB domain-containing protein 8</fullName>
    </recommendedName>
</protein>
<keyword id="KW-0963">Cytoplasm</keyword>
<keyword id="KW-0206">Cytoskeleton</keyword>
<keyword id="KW-0333">Golgi apparatus</keyword>
<keyword id="KW-0880">Kelch repeat</keyword>
<keyword id="KW-1185">Reference proteome</keyword>
<keyword id="KW-0677">Repeat</keyword>
<keyword id="KW-0810">Translation regulation</keyword>
<keyword id="KW-0833">Ubl conjugation pathway</keyword>
<evidence type="ECO:0000250" key="1">
    <source>
        <dbReference type="UniProtKB" id="Q8NFY9"/>
    </source>
</evidence>
<evidence type="ECO:0000255" key="2"/>
<evidence type="ECO:0000255" key="3">
    <source>
        <dbReference type="PROSITE-ProRule" id="PRU00037"/>
    </source>
</evidence>
<evidence type="ECO:0000269" key="4">
    <source>
    </source>
</evidence>
<evidence type="ECO:0000305" key="5"/>
<name>KBTB8_XENTR</name>
<gene>
    <name type="primary">kbtbd8</name>
</gene>
<organism>
    <name type="scientific">Xenopus tropicalis</name>
    <name type="common">Western clawed frog</name>
    <name type="synonym">Silurana tropicalis</name>
    <dbReference type="NCBI Taxonomy" id="8364"/>
    <lineage>
        <taxon>Eukaryota</taxon>
        <taxon>Metazoa</taxon>
        <taxon>Chordata</taxon>
        <taxon>Craniata</taxon>
        <taxon>Vertebrata</taxon>
        <taxon>Euteleostomi</taxon>
        <taxon>Amphibia</taxon>
        <taxon>Batrachia</taxon>
        <taxon>Anura</taxon>
        <taxon>Pipoidea</taxon>
        <taxon>Pipidae</taxon>
        <taxon>Xenopodinae</taxon>
        <taxon>Xenopus</taxon>
        <taxon>Silurana</taxon>
    </lineage>
</organism>
<feature type="chain" id="PRO_0000439643" description="Kelch repeat and BTB domain-containing protein 8">
    <location>
        <begin position="1"/>
        <end position="606"/>
    </location>
</feature>
<feature type="domain" description="BTB" evidence="3">
    <location>
        <begin position="55"/>
        <end position="123"/>
    </location>
</feature>
<feature type="domain" description="BACK" evidence="2">
    <location>
        <begin position="158"/>
        <end position="258"/>
    </location>
</feature>
<feature type="repeat" description="Kelch 1" evidence="2">
    <location>
        <begin position="342"/>
        <end position="396"/>
    </location>
</feature>
<feature type="repeat" description="Kelch 2" evidence="2">
    <location>
        <begin position="397"/>
        <end position="447"/>
    </location>
</feature>
<feature type="repeat" description="Kelch 3" evidence="2">
    <location>
        <begin position="449"/>
        <end position="487"/>
    </location>
</feature>
<feature type="repeat" description="Kelch 4" evidence="2">
    <location>
        <begin position="488"/>
        <end position="534"/>
    </location>
</feature>
<feature type="repeat" description="Kelch 5" evidence="2">
    <location>
        <begin position="546"/>
        <end position="593"/>
    </location>
</feature>
<accession>A0A1B8YAB1</accession>
<accession>F6VT55</accession>
<proteinExistence type="inferred from homology"/>